<feature type="chain" id="PRO_0000175510" description="DNA-directed RNA polymerase subunit alpha">
    <location>
        <begin position="1"/>
        <end position="214"/>
    </location>
</feature>
<organism>
    <name type="scientific">Euglena viridis</name>
    <name type="common">Cercaria viridis</name>
    <dbReference type="NCBI Taxonomy" id="3040"/>
    <lineage>
        <taxon>Eukaryota</taxon>
        <taxon>Discoba</taxon>
        <taxon>Euglenozoa</taxon>
        <taxon>Euglenida</taxon>
        <taxon>Spirocuta</taxon>
        <taxon>Euglenophyceae</taxon>
        <taxon>Euglenales</taxon>
        <taxon>Euglenaceae</taxon>
        <taxon>Euglena</taxon>
    </lineage>
</organism>
<gene>
    <name type="primary">rpoA</name>
</gene>
<evidence type="ECO:0000250" key="1"/>
<evidence type="ECO:0000305" key="2"/>
<keyword id="KW-0150">Chloroplast</keyword>
<keyword id="KW-0240">DNA-directed RNA polymerase</keyword>
<keyword id="KW-0548">Nucleotidyltransferase</keyword>
<keyword id="KW-0934">Plastid</keyword>
<keyword id="KW-0804">Transcription</keyword>
<keyword id="KW-0808">Transferase</keyword>
<name>RPOA_EUGVI</name>
<reference key="1">
    <citation type="journal article" date="2002" name="Nucleic Acids Res.">
        <title>Identification and comparative analysis of the chloroplast alpha-subunit gene of DNA-dependent RNA polymerase from seven Euglena species.</title>
        <authorList>
            <person name="Sheveleva E.V."/>
            <person name="Giordani N.V."/>
            <person name="Hallick R.B."/>
        </authorList>
    </citation>
    <scope>NUCLEOTIDE SEQUENCE [GENOMIC DNA]</scope>
    <source>
        <strain>UTEX 85</strain>
    </source>
</reference>
<geneLocation type="chloroplast"/>
<proteinExistence type="inferred from homology"/>
<dbReference type="EC" id="2.7.7.6"/>
<dbReference type="EMBL" id="AY047487">
    <property type="protein sequence ID" value="AAL83368.1"/>
    <property type="molecule type" value="Genomic_DNA"/>
</dbReference>
<dbReference type="SMR" id="Q8SL86"/>
<dbReference type="GO" id="GO:0009507">
    <property type="term" value="C:chloroplast"/>
    <property type="evidence" value="ECO:0007669"/>
    <property type="project" value="UniProtKB-SubCell"/>
</dbReference>
<dbReference type="GO" id="GO:0000428">
    <property type="term" value="C:DNA-directed RNA polymerase complex"/>
    <property type="evidence" value="ECO:0007669"/>
    <property type="project" value="UniProtKB-KW"/>
</dbReference>
<dbReference type="GO" id="GO:0005739">
    <property type="term" value="C:mitochondrion"/>
    <property type="evidence" value="ECO:0007669"/>
    <property type="project" value="GOC"/>
</dbReference>
<dbReference type="GO" id="GO:0003899">
    <property type="term" value="F:DNA-directed RNA polymerase activity"/>
    <property type="evidence" value="ECO:0007669"/>
    <property type="project" value="UniProtKB-EC"/>
</dbReference>
<dbReference type="GO" id="GO:0046983">
    <property type="term" value="F:protein dimerization activity"/>
    <property type="evidence" value="ECO:0007669"/>
    <property type="project" value="InterPro"/>
</dbReference>
<dbReference type="GO" id="GO:0006351">
    <property type="term" value="P:DNA-templated transcription"/>
    <property type="evidence" value="ECO:0007669"/>
    <property type="project" value="InterPro"/>
</dbReference>
<dbReference type="Gene3D" id="2.170.120.12">
    <property type="entry name" value="DNA-directed RNA polymerase, insert domain"/>
    <property type="match status" value="1"/>
</dbReference>
<dbReference type="Gene3D" id="3.30.1360.10">
    <property type="entry name" value="RNA polymerase, RBP11-like subunit"/>
    <property type="match status" value="1"/>
</dbReference>
<dbReference type="InterPro" id="IPR036603">
    <property type="entry name" value="RBP11-like"/>
</dbReference>
<dbReference type="InterPro" id="IPR036643">
    <property type="entry name" value="RNApol_insert_sf"/>
</dbReference>
<dbReference type="SUPFAM" id="SSF56553">
    <property type="entry name" value="Insert subdomain of RNA polymerase alpha subunit"/>
    <property type="match status" value="1"/>
</dbReference>
<dbReference type="SUPFAM" id="SSF55257">
    <property type="entry name" value="RBP11-like subunits of RNA polymerase"/>
    <property type="match status" value="1"/>
</dbReference>
<accession>Q8SL86</accession>
<comment type="function">
    <text evidence="1">DNA-dependent RNA polymerase catalyzes the transcription of DNA into RNA using the four ribonucleoside triphosphates as substrates.</text>
</comment>
<comment type="catalytic activity">
    <reaction>
        <text>RNA(n) + a ribonucleoside 5'-triphosphate = RNA(n+1) + diphosphate</text>
        <dbReference type="Rhea" id="RHEA:21248"/>
        <dbReference type="Rhea" id="RHEA-COMP:14527"/>
        <dbReference type="Rhea" id="RHEA-COMP:17342"/>
        <dbReference type="ChEBI" id="CHEBI:33019"/>
        <dbReference type="ChEBI" id="CHEBI:61557"/>
        <dbReference type="ChEBI" id="CHEBI:140395"/>
        <dbReference type="EC" id="2.7.7.6"/>
    </reaction>
</comment>
<comment type="subunit">
    <text evidence="1">In plastids the minimal PEP RNA polymerase catalytic core is composed of four subunits: alpha, beta, beta', and beta''. When a (nuclear-encoded) sigma factor is associated with the core the holoenzyme is formed, which can initiate transcription (By similarity).</text>
</comment>
<comment type="subcellular location">
    <subcellularLocation>
        <location>Plastid</location>
        <location>Chloroplast</location>
    </subcellularLocation>
</comment>
<comment type="similarity">
    <text evidence="2">Belongs to the RNA polymerase alpha chain family.</text>
</comment>
<comment type="caution">
    <text evidence="2">The C-terminal domain thought to be required for interaction with some regulatory factors is missing from this protein.</text>
</comment>
<sequence>MKLIKICVLKNSIFRDTFYSLFDIIYPRSENSLIFANQLRRILLGKSEGLRFLKISGFIANKNSKFSVYQKINEFSEFEEINESVFQLFLNIKNIDLYYRSCDANKRFFGTLEAYYPKTYSQDDIILSKNIKLIKKNQHIFSLSSLKLKMKFILEAKKGIGSFFTPVKRVNYIIEENKLSFSRVVLELETDKRRGCFSSTIDAFKVLNFFALNM</sequence>
<protein>
    <recommendedName>
        <fullName>DNA-directed RNA polymerase subunit alpha</fullName>
        <shortName>PEP</shortName>
        <ecNumber>2.7.7.6</ecNumber>
    </recommendedName>
    <alternativeName>
        <fullName>Plastid-encoded RNA polymerase subunit alpha</fullName>
        <shortName>RNA polymerase subunit alpha</shortName>
    </alternativeName>
</protein>